<evidence type="ECO:0000250" key="1"/>
<evidence type="ECO:0000269" key="2">
    <source>
    </source>
</evidence>
<evidence type="ECO:0000269" key="3">
    <source ref="6"/>
</evidence>
<evidence type="ECO:0000305" key="4"/>
<protein>
    <recommendedName>
        <fullName>Triosephosphate isomerase</fullName>
        <shortName>TIM</shortName>
        <ecNumber>5.3.1.1</ecNumber>
    </recommendedName>
    <alternativeName>
        <fullName>Triose-phosphate isomerase</fullName>
    </alternativeName>
</protein>
<accession>Q9P940</accession>
<accession>A0A1D8PKS9</accession>
<accession>P82613</accession>
<accession>Q5ADU6</accession>
<accession>Q9P848</accession>
<organism>
    <name type="scientific">Candida albicans (strain SC5314 / ATCC MYA-2876)</name>
    <name type="common">Yeast</name>
    <dbReference type="NCBI Taxonomy" id="237561"/>
    <lineage>
        <taxon>Eukaryota</taxon>
        <taxon>Fungi</taxon>
        <taxon>Dikarya</taxon>
        <taxon>Ascomycota</taxon>
        <taxon>Saccharomycotina</taxon>
        <taxon>Pichiomycetes</taxon>
        <taxon>Debaryomycetaceae</taxon>
        <taxon>Candida/Lodderomyces clade</taxon>
        <taxon>Candida</taxon>
    </lineage>
</organism>
<name>TPIS_CANAL</name>
<feature type="initiator methionine" description="Removed" evidence="3">
    <location>
        <position position="1"/>
    </location>
</feature>
<feature type="chain" id="PRO_0000090158" description="Triosephosphate isomerase">
    <location>
        <begin position="2"/>
        <end position="248"/>
    </location>
</feature>
<feature type="active site" description="Electrophile" evidence="1">
    <location>
        <position position="95"/>
    </location>
</feature>
<feature type="active site" description="Proton acceptor" evidence="1">
    <location>
        <position position="165"/>
    </location>
</feature>
<feature type="binding site" evidence="1">
    <location>
        <position position="10"/>
    </location>
    <ligand>
        <name>substrate</name>
    </ligand>
</feature>
<feature type="binding site" evidence="1">
    <location>
        <position position="12"/>
    </location>
    <ligand>
        <name>substrate</name>
    </ligand>
</feature>
<feature type="sequence conflict" description="In Ref. 1; CAB77631." evidence="4" ref="1">
    <original>S</original>
    <variation>T</variation>
    <location>
        <position position="195"/>
    </location>
</feature>
<gene>
    <name type="primary">TPI1</name>
    <name type="ordered locus">CAALFM_C307440WA</name>
    <name type="ORF">CaO19.14037</name>
    <name type="ORF">CaO19.6745</name>
</gene>
<dbReference type="EC" id="5.3.1.1"/>
<dbReference type="EMBL" id="AJ390491">
    <property type="protein sequence ID" value="CAB77631.1"/>
    <property type="molecule type" value="mRNA"/>
</dbReference>
<dbReference type="EMBL" id="AF124845">
    <property type="protein sequence ID" value="AAF28895.1"/>
    <property type="molecule type" value="Genomic_DNA"/>
</dbReference>
<dbReference type="EMBL" id="CP017625">
    <property type="protein sequence ID" value="AOW28746.1"/>
    <property type="molecule type" value="Genomic_DNA"/>
</dbReference>
<dbReference type="RefSeq" id="XP_719842.1">
    <property type="nucleotide sequence ID" value="XM_714749.1"/>
</dbReference>
<dbReference type="SMR" id="Q9P940"/>
<dbReference type="BioGRID" id="1221576">
    <property type="interactions" value="1"/>
</dbReference>
<dbReference type="FunCoup" id="Q9P940">
    <property type="interactions" value="729"/>
</dbReference>
<dbReference type="STRING" id="237561.Q9P940"/>
<dbReference type="EnsemblFungi" id="C3_07440W_A-T">
    <property type="protein sequence ID" value="C3_07440W_A-T-p1"/>
    <property type="gene ID" value="C3_07440W_A"/>
</dbReference>
<dbReference type="GeneID" id="3638482"/>
<dbReference type="KEGG" id="cal:CAALFM_C307440WA"/>
<dbReference type="CGD" id="CAL0000173961">
    <property type="gene designation" value="TPI1"/>
</dbReference>
<dbReference type="VEuPathDB" id="FungiDB:C3_07440W_A"/>
<dbReference type="eggNOG" id="KOG1643">
    <property type="taxonomic scope" value="Eukaryota"/>
</dbReference>
<dbReference type="HOGENOM" id="CLU_024251_2_1_1"/>
<dbReference type="InParanoid" id="Q9P940"/>
<dbReference type="OMA" id="NWKMHMT"/>
<dbReference type="OrthoDB" id="6715177at2759"/>
<dbReference type="UniPathway" id="UPA00109">
    <property type="reaction ID" value="UER00189"/>
</dbReference>
<dbReference type="UniPathway" id="UPA00138"/>
<dbReference type="PRO" id="PR:Q9P940"/>
<dbReference type="Proteomes" id="UP000000559">
    <property type="component" value="Chromosome 3"/>
</dbReference>
<dbReference type="GO" id="GO:0009986">
    <property type="term" value="C:cell surface"/>
    <property type="evidence" value="ECO:0000314"/>
    <property type="project" value="CGD"/>
</dbReference>
<dbReference type="GO" id="GO:0005737">
    <property type="term" value="C:cytoplasm"/>
    <property type="evidence" value="ECO:0000314"/>
    <property type="project" value="UniProtKB"/>
</dbReference>
<dbReference type="GO" id="GO:0005829">
    <property type="term" value="C:cytosol"/>
    <property type="evidence" value="ECO:0000318"/>
    <property type="project" value="GO_Central"/>
</dbReference>
<dbReference type="GO" id="GO:0062040">
    <property type="term" value="C:fungal biofilm matrix"/>
    <property type="evidence" value="ECO:0000314"/>
    <property type="project" value="CGD"/>
</dbReference>
<dbReference type="GO" id="GO:0009277">
    <property type="term" value="C:fungal-type cell wall"/>
    <property type="evidence" value="ECO:0000314"/>
    <property type="project" value="CGD"/>
</dbReference>
<dbReference type="GO" id="GO:0030446">
    <property type="term" value="C:hyphal cell wall"/>
    <property type="evidence" value="ECO:0000314"/>
    <property type="project" value="CGD"/>
</dbReference>
<dbReference type="GO" id="GO:0004807">
    <property type="term" value="F:triose-phosphate isomerase activity"/>
    <property type="evidence" value="ECO:0000318"/>
    <property type="project" value="GO_Central"/>
</dbReference>
<dbReference type="GO" id="GO:0061621">
    <property type="term" value="P:canonical glycolysis"/>
    <property type="evidence" value="ECO:0007669"/>
    <property type="project" value="EnsemblFungi"/>
</dbReference>
<dbReference type="GO" id="GO:0009267">
    <property type="term" value="P:cellular response to starvation"/>
    <property type="evidence" value="ECO:0000315"/>
    <property type="project" value="CGD"/>
</dbReference>
<dbReference type="GO" id="GO:0030447">
    <property type="term" value="P:filamentous growth"/>
    <property type="evidence" value="ECO:0000315"/>
    <property type="project" value="CGD"/>
</dbReference>
<dbReference type="GO" id="GO:0036180">
    <property type="term" value="P:filamentous growth of a population of unicellular organisms in response to biotic stimulus"/>
    <property type="evidence" value="ECO:0000315"/>
    <property type="project" value="CGD"/>
</dbReference>
<dbReference type="GO" id="GO:0036170">
    <property type="term" value="P:filamentous growth of a population of unicellular organisms in response to starvation"/>
    <property type="evidence" value="ECO:0000315"/>
    <property type="project" value="CGD"/>
</dbReference>
<dbReference type="GO" id="GO:0006094">
    <property type="term" value="P:gluconeogenesis"/>
    <property type="evidence" value="ECO:0000318"/>
    <property type="project" value="GO_Central"/>
</dbReference>
<dbReference type="GO" id="GO:0046166">
    <property type="term" value="P:glyceraldehyde-3-phosphate biosynthetic process"/>
    <property type="evidence" value="ECO:0000318"/>
    <property type="project" value="GO_Central"/>
</dbReference>
<dbReference type="GO" id="GO:0019563">
    <property type="term" value="P:glycerol catabolic process"/>
    <property type="evidence" value="ECO:0000318"/>
    <property type="project" value="GO_Central"/>
</dbReference>
<dbReference type="GO" id="GO:0006096">
    <property type="term" value="P:glycolytic process"/>
    <property type="evidence" value="ECO:0000318"/>
    <property type="project" value="GO_Central"/>
</dbReference>
<dbReference type="GO" id="GO:0052553">
    <property type="term" value="P:symbiont-mediated perturbation of host immune response"/>
    <property type="evidence" value="ECO:0000314"/>
    <property type="project" value="CGD"/>
</dbReference>
<dbReference type="CDD" id="cd00311">
    <property type="entry name" value="TIM"/>
    <property type="match status" value="1"/>
</dbReference>
<dbReference type="FunFam" id="3.20.20.70:FF:000025">
    <property type="entry name" value="Triosephosphate isomerase"/>
    <property type="match status" value="1"/>
</dbReference>
<dbReference type="Gene3D" id="3.20.20.70">
    <property type="entry name" value="Aldolase class I"/>
    <property type="match status" value="1"/>
</dbReference>
<dbReference type="HAMAP" id="MF_00147_B">
    <property type="entry name" value="TIM_B"/>
    <property type="match status" value="1"/>
</dbReference>
<dbReference type="InterPro" id="IPR013785">
    <property type="entry name" value="Aldolase_TIM"/>
</dbReference>
<dbReference type="InterPro" id="IPR035990">
    <property type="entry name" value="TIM_sf"/>
</dbReference>
<dbReference type="InterPro" id="IPR022896">
    <property type="entry name" value="TrioseP_Isoase_bac/euk"/>
</dbReference>
<dbReference type="InterPro" id="IPR000652">
    <property type="entry name" value="Triosephosphate_isomerase"/>
</dbReference>
<dbReference type="InterPro" id="IPR020861">
    <property type="entry name" value="Triosephosphate_isomerase_AS"/>
</dbReference>
<dbReference type="NCBIfam" id="TIGR00419">
    <property type="entry name" value="tim"/>
    <property type="match status" value="1"/>
</dbReference>
<dbReference type="PANTHER" id="PTHR21139">
    <property type="entry name" value="TRIOSEPHOSPHATE ISOMERASE"/>
    <property type="match status" value="1"/>
</dbReference>
<dbReference type="PANTHER" id="PTHR21139:SF41">
    <property type="entry name" value="TRIOSEPHOSPHATE ISOMERASE"/>
    <property type="match status" value="1"/>
</dbReference>
<dbReference type="Pfam" id="PF00121">
    <property type="entry name" value="TIM"/>
    <property type="match status" value="1"/>
</dbReference>
<dbReference type="SUPFAM" id="SSF51351">
    <property type="entry name" value="Triosephosphate isomerase (TIM)"/>
    <property type="match status" value="1"/>
</dbReference>
<dbReference type="PROSITE" id="PS00171">
    <property type="entry name" value="TIM_1"/>
    <property type="match status" value="1"/>
</dbReference>
<dbReference type="PROSITE" id="PS51440">
    <property type="entry name" value="TIM_2"/>
    <property type="match status" value="1"/>
</dbReference>
<proteinExistence type="evidence at protein level"/>
<keyword id="KW-0963">Cytoplasm</keyword>
<keyword id="KW-0903">Direct protein sequencing</keyword>
<keyword id="KW-0312">Gluconeogenesis</keyword>
<keyword id="KW-0324">Glycolysis</keyword>
<keyword id="KW-0413">Isomerase</keyword>
<keyword id="KW-1185">Reference proteome</keyword>
<reference key="1">
    <citation type="journal article" date="2001" name="Nat. Biotechnol.">
        <title>An antisense-based functional genomics approach for identification of genes critical for growth of Candida albicans.</title>
        <authorList>
            <person name="De Backer M.D."/>
            <person name="Nelissen B."/>
            <person name="Logghe M."/>
            <person name="Viaene J."/>
            <person name="Loonen I."/>
            <person name="Vandoninck S."/>
            <person name="de Hoogt R."/>
            <person name="Dewaele S."/>
            <person name="Simons F.A."/>
            <person name="Verhasselt P."/>
            <person name="Vanhoof G."/>
            <person name="Contreras R."/>
            <person name="Luyten W.H.M.L."/>
        </authorList>
    </citation>
    <scope>NUCLEOTIDE SEQUENCE [MRNA]</scope>
</reference>
<reference key="2">
    <citation type="journal article" date="2001" name="Yeast">
        <title>The ALS5 gene of Candida albicans and analysis of the Als5p N-terminal domain.</title>
        <authorList>
            <person name="Hoyer L.L."/>
            <person name="Hecht J.E."/>
        </authorList>
    </citation>
    <scope>NUCLEOTIDE SEQUENCE [GENOMIC DNA]</scope>
    <source>
        <strain>1161</strain>
    </source>
</reference>
<reference key="3">
    <citation type="journal article" date="2004" name="Proc. Natl. Acad. Sci. U.S.A.">
        <title>The diploid genome sequence of Candida albicans.</title>
        <authorList>
            <person name="Jones T."/>
            <person name="Federspiel N.A."/>
            <person name="Chibana H."/>
            <person name="Dungan J."/>
            <person name="Kalman S."/>
            <person name="Magee B.B."/>
            <person name="Newport G."/>
            <person name="Thorstenson Y.R."/>
            <person name="Agabian N."/>
            <person name="Magee P.T."/>
            <person name="Davis R.W."/>
            <person name="Scherer S."/>
        </authorList>
    </citation>
    <scope>NUCLEOTIDE SEQUENCE [LARGE SCALE GENOMIC DNA]</scope>
    <source>
        <strain>SC5314 / ATCC MYA-2876</strain>
    </source>
</reference>
<reference key="4">
    <citation type="journal article" date="2007" name="Genome Biol.">
        <title>Assembly of the Candida albicans genome into sixteen supercontigs aligned on the eight chromosomes.</title>
        <authorList>
            <person name="van het Hoog M."/>
            <person name="Rast T.J."/>
            <person name="Martchenko M."/>
            <person name="Grindle S."/>
            <person name="Dignard D."/>
            <person name="Hogues H."/>
            <person name="Cuomo C."/>
            <person name="Berriman M."/>
            <person name="Scherer S."/>
            <person name="Magee B.B."/>
            <person name="Whiteway M."/>
            <person name="Chibana H."/>
            <person name="Nantel A."/>
            <person name="Magee P.T."/>
        </authorList>
    </citation>
    <scope>GENOME REANNOTATION</scope>
    <source>
        <strain>SC5314 / ATCC MYA-2876</strain>
    </source>
</reference>
<reference key="5">
    <citation type="journal article" date="2013" name="Genome Biol.">
        <title>Assembly of a phased diploid Candida albicans genome facilitates allele-specific measurements and provides a simple model for repeat and indel structure.</title>
        <authorList>
            <person name="Muzzey D."/>
            <person name="Schwartz K."/>
            <person name="Weissman J.S."/>
            <person name="Sherlock G."/>
        </authorList>
    </citation>
    <scope>NUCLEOTIDE SEQUENCE [LARGE SCALE GENOMIC DNA]</scope>
    <scope>GENOME REANNOTATION</scope>
    <source>
        <strain>SC5314 / ATCC MYA-2876</strain>
    </source>
</reference>
<reference key="6">
    <citation type="journal article" date="2001" name="Proteomics">
        <title>Analysis of the serologic response to systemic Candida albicans infection in a murine model.</title>
        <authorList>
            <person name="Pitarch A."/>
            <person name="Diez-Orejas R."/>
            <person name="Molero G."/>
            <person name="Pardo M."/>
            <person name="Sanchez M."/>
            <person name="Gil C."/>
            <person name="Nombela C."/>
        </authorList>
    </citation>
    <scope>PROTEIN SEQUENCE OF 2-11</scope>
    <source>
        <strain>SC5314 / ATCC MYA-2876</strain>
    </source>
</reference>
<reference key="7">
    <citation type="journal article" date="2004" name="Proteomics">
        <title>Proteomics-based identification of novel Candida albicans antigens for diagnosis of systemic candidiasis in patients with underlying hematological malignancies.</title>
        <authorList>
            <person name="Pitarch A."/>
            <person name="Abian J."/>
            <person name="Carrascal M."/>
            <person name="Sanchez M."/>
            <person name="Nombela C."/>
            <person name="Gil C."/>
        </authorList>
    </citation>
    <scope>PROTEIN SEQUENCE OF 123-134 AND 139-145</scope>
    <scope>SUBCELLULAR LOCATION</scope>
    <scope>ANTIGENICITY</scope>
    <source>
        <strain>SC5314 / ATCC MYA-2876</strain>
        <tissue>Protoplast</tissue>
    </source>
</reference>
<sequence length="248" mass="26611">MARQFFVGGNFKANGTKQQITSIIDNLNKADLPKDVEVVICPPALYLGLAVEQNKQPTVAIGAQNVFDKSCGAFTGETCASQILDVGASWTLTGHSERRTIIKESDEFIAEKTKFALDTGVKVILCIGETLEERKGGVTLDVCARQLDAVSKIVSDWSNIVVAYEPVWAIGTGLAATPEDAEETHKGIRAHLAKSIGAEQAEKTRILYGGSVNGKNAKDFKDKANVDGFLVGGASLKPEFVDIIKSRL</sequence>
<comment type="catalytic activity">
    <reaction>
        <text>D-glyceraldehyde 3-phosphate = dihydroxyacetone phosphate</text>
        <dbReference type="Rhea" id="RHEA:18585"/>
        <dbReference type="ChEBI" id="CHEBI:57642"/>
        <dbReference type="ChEBI" id="CHEBI:59776"/>
        <dbReference type="EC" id="5.3.1.1"/>
    </reaction>
</comment>
<comment type="pathway">
    <text>Carbohydrate biosynthesis; gluconeogenesis.</text>
</comment>
<comment type="pathway">
    <text>Carbohydrate degradation; glycolysis; D-glyceraldehyde 3-phosphate from glycerone phosphate: step 1/1.</text>
</comment>
<comment type="subunit">
    <text evidence="1">Homodimer.</text>
</comment>
<comment type="subcellular location">
    <subcellularLocation>
        <location evidence="2">Cytoplasm</location>
    </subcellularLocation>
</comment>
<comment type="miscellaneous">
    <text>Has antigenic properties.</text>
</comment>
<comment type="miscellaneous">
    <text>Critical for growth.</text>
</comment>
<comment type="similarity">
    <text evidence="4">Belongs to the triosephosphate isomerase family.</text>
</comment>